<protein>
    <recommendedName>
        <fullName evidence="1">Potassium-transporting ATPase KdpC subunit</fullName>
    </recommendedName>
    <alternativeName>
        <fullName evidence="1">ATP phosphohydrolase [potassium-transporting] C chain</fullName>
    </alternativeName>
    <alternativeName>
        <fullName evidence="1">Potassium-binding and translocating subunit C</fullName>
    </alternativeName>
    <alternativeName>
        <fullName evidence="1">Potassium-translocating ATPase C chain</fullName>
    </alternativeName>
</protein>
<comment type="function">
    <text evidence="1">Part of the high-affinity ATP-driven potassium transport (or Kdp) system, which catalyzes the hydrolysis of ATP coupled with the electrogenic transport of potassium into the cytoplasm. This subunit acts as a catalytic chaperone that increases the ATP-binding affinity of the ATP-hydrolyzing subunit KdpB by the formation of a transient KdpB/KdpC/ATP ternary complex.</text>
</comment>
<comment type="subunit">
    <text evidence="1">The system is composed of three essential subunits: KdpA, KdpB and KdpC.</text>
</comment>
<comment type="subcellular location">
    <subcellularLocation>
        <location evidence="1">Cell inner membrane</location>
        <topology evidence="1">Single-pass membrane protein</topology>
    </subcellularLocation>
</comment>
<comment type="similarity">
    <text evidence="1">Belongs to the KdpC family.</text>
</comment>
<accession>A5W155</accession>
<name>KDPC_PSEP1</name>
<gene>
    <name evidence="1" type="primary">kdpC</name>
    <name type="ordered locus">Pput_1709</name>
</gene>
<feature type="chain" id="PRO_1000059218" description="Potassium-transporting ATPase KdpC subunit">
    <location>
        <begin position="1"/>
        <end position="185"/>
    </location>
</feature>
<feature type="transmembrane region" description="Helical" evidence="1">
    <location>
        <begin position="11"/>
        <end position="31"/>
    </location>
</feature>
<reference key="1">
    <citation type="submission" date="2007-05" db="EMBL/GenBank/DDBJ databases">
        <title>Complete sequence of Pseudomonas putida F1.</title>
        <authorList>
            <consortium name="US DOE Joint Genome Institute"/>
            <person name="Copeland A."/>
            <person name="Lucas S."/>
            <person name="Lapidus A."/>
            <person name="Barry K."/>
            <person name="Detter J.C."/>
            <person name="Glavina del Rio T."/>
            <person name="Hammon N."/>
            <person name="Israni S."/>
            <person name="Dalin E."/>
            <person name="Tice H."/>
            <person name="Pitluck S."/>
            <person name="Chain P."/>
            <person name="Malfatti S."/>
            <person name="Shin M."/>
            <person name="Vergez L."/>
            <person name="Schmutz J."/>
            <person name="Larimer F."/>
            <person name="Land M."/>
            <person name="Hauser L."/>
            <person name="Kyrpides N."/>
            <person name="Lykidis A."/>
            <person name="Parales R."/>
            <person name="Richardson P."/>
        </authorList>
    </citation>
    <scope>NUCLEOTIDE SEQUENCE [LARGE SCALE GENOMIC DNA]</scope>
    <source>
        <strain>ATCC 700007 / DSM 6899 / JCM 31910 / BCRC 17059 / LMG 24140 / F1</strain>
    </source>
</reference>
<organism>
    <name type="scientific">Pseudomonas putida (strain ATCC 700007 / DSM 6899 / JCM 31910 / BCRC 17059 / LMG 24140 / F1)</name>
    <dbReference type="NCBI Taxonomy" id="351746"/>
    <lineage>
        <taxon>Bacteria</taxon>
        <taxon>Pseudomonadati</taxon>
        <taxon>Pseudomonadota</taxon>
        <taxon>Gammaproteobacteria</taxon>
        <taxon>Pseudomonadales</taxon>
        <taxon>Pseudomonadaceae</taxon>
        <taxon>Pseudomonas</taxon>
    </lineage>
</organism>
<dbReference type="EMBL" id="CP000712">
    <property type="protein sequence ID" value="ABQ77865.1"/>
    <property type="molecule type" value="Genomic_DNA"/>
</dbReference>
<dbReference type="SMR" id="A5W155"/>
<dbReference type="KEGG" id="ppf:Pput_1709"/>
<dbReference type="eggNOG" id="COG2156">
    <property type="taxonomic scope" value="Bacteria"/>
</dbReference>
<dbReference type="HOGENOM" id="CLU_077094_2_0_6"/>
<dbReference type="GO" id="GO:0005886">
    <property type="term" value="C:plasma membrane"/>
    <property type="evidence" value="ECO:0007669"/>
    <property type="project" value="UniProtKB-SubCell"/>
</dbReference>
<dbReference type="GO" id="GO:0005524">
    <property type="term" value="F:ATP binding"/>
    <property type="evidence" value="ECO:0007669"/>
    <property type="project" value="UniProtKB-UniRule"/>
</dbReference>
<dbReference type="GO" id="GO:0008556">
    <property type="term" value="F:P-type potassium transmembrane transporter activity"/>
    <property type="evidence" value="ECO:0007669"/>
    <property type="project" value="InterPro"/>
</dbReference>
<dbReference type="HAMAP" id="MF_00276">
    <property type="entry name" value="KdpC"/>
    <property type="match status" value="1"/>
</dbReference>
<dbReference type="InterPro" id="IPR003820">
    <property type="entry name" value="KdpC"/>
</dbReference>
<dbReference type="NCBIfam" id="TIGR00681">
    <property type="entry name" value="kdpC"/>
    <property type="match status" value="1"/>
</dbReference>
<dbReference type="NCBIfam" id="NF001454">
    <property type="entry name" value="PRK00315.1"/>
    <property type="match status" value="1"/>
</dbReference>
<dbReference type="PANTHER" id="PTHR30042">
    <property type="entry name" value="POTASSIUM-TRANSPORTING ATPASE C CHAIN"/>
    <property type="match status" value="1"/>
</dbReference>
<dbReference type="PANTHER" id="PTHR30042:SF2">
    <property type="entry name" value="POTASSIUM-TRANSPORTING ATPASE KDPC SUBUNIT"/>
    <property type="match status" value="1"/>
</dbReference>
<dbReference type="Pfam" id="PF02669">
    <property type="entry name" value="KdpC"/>
    <property type="match status" value="1"/>
</dbReference>
<dbReference type="PIRSF" id="PIRSF001296">
    <property type="entry name" value="K_ATPase_KdpC"/>
    <property type="match status" value="1"/>
</dbReference>
<evidence type="ECO:0000255" key="1">
    <source>
        <dbReference type="HAMAP-Rule" id="MF_00276"/>
    </source>
</evidence>
<sequence>MTAYLRPALSLALLMTLVTGALYPLAVTGIAQVAFPNQANGSLVRDAQGQVRGSALIAQDFQGDGWFHSRPSAGAYATVASGASNLSPSNPALAERVKGDAATLYQAQQGPVPQALLTTSGSGLDPHLPPEALAYQIPRVAAARQLPVERLQALLEQATLHPLIGPPVVNVLALNQALEKLAIVR</sequence>
<keyword id="KW-0067">ATP-binding</keyword>
<keyword id="KW-0997">Cell inner membrane</keyword>
<keyword id="KW-1003">Cell membrane</keyword>
<keyword id="KW-0406">Ion transport</keyword>
<keyword id="KW-0472">Membrane</keyword>
<keyword id="KW-0547">Nucleotide-binding</keyword>
<keyword id="KW-0630">Potassium</keyword>
<keyword id="KW-0633">Potassium transport</keyword>
<keyword id="KW-0812">Transmembrane</keyword>
<keyword id="KW-1133">Transmembrane helix</keyword>
<keyword id="KW-0813">Transport</keyword>
<proteinExistence type="inferred from homology"/>